<keyword id="KW-0028">Amino-acid biosynthesis</keyword>
<keyword id="KW-0100">Branched-chain amino acid biosynthesis</keyword>
<keyword id="KW-0432">Leucine biosynthesis</keyword>
<keyword id="KW-0456">Lyase</keyword>
<protein>
    <recommendedName>
        <fullName evidence="1">3-isopropylmalate dehydratase small subunit</fullName>
        <ecNumber evidence="1">4.2.1.33</ecNumber>
    </recommendedName>
    <alternativeName>
        <fullName evidence="1">Alpha-IPM isomerase</fullName>
        <shortName evidence="1">IPMI</shortName>
    </alternativeName>
    <alternativeName>
        <fullName evidence="1">Isopropylmalate isomerase</fullName>
    </alternativeName>
</protein>
<organism>
    <name type="scientific">Xylella fastidiosa (strain 9a5c)</name>
    <dbReference type="NCBI Taxonomy" id="160492"/>
    <lineage>
        <taxon>Bacteria</taxon>
        <taxon>Pseudomonadati</taxon>
        <taxon>Pseudomonadota</taxon>
        <taxon>Gammaproteobacteria</taxon>
        <taxon>Lysobacterales</taxon>
        <taxon>Lysobacteraceae</taxon>
        <taxon>Xylella</taxon>
    </lineage>
</organism>
<dbReference type="EC" id="4.2.1.33" evidence="1"/>
<dbReference type="EMBL" id="AE003849">
    <property type="protein sequence ID" value="AAF85173.1"/>
    <property type="molecule type" value="Genomic_DNA"/>
</dbReference>
<dbReference type="PIR" id="G82564">
    <property type="entry name" value="G82564"/>
</dbReference>
<dbReference type="RefSeq" id="WP_010894820.1">
    <property type="nucleotide sequence ID" value="NC_002488.3"/>
</dbReference>
<dbReference type="SMR" id="Q9PAX1"/>
<dbReference type="STRING" id="160492.XF_2374"/>
<dbReference type="KEGG" id="xfa:XF_2374"/>
<dbReference type="eggNOG" id="COG0066">
    <property type="taxonomic scope" value="Bacteria"/>
</dbReference>
<dbReference type="HOGENOM" id="CLU_081378_0_3_6"/>
<dbReference type="UniPathway" id="UPA00048">
    <property type="reaction ID" value="UER00071"/>
</dbReference>
<dbReference type="Proteomes" id="UP000000812">
    <property type="component" value="Chromosome"/>
</dbReference>
<dbReference type="GO" id="GO:0009316">
    <property type="term" value="C:3-isopropylmalate dehydratase complex"/>
    <property type="evidence" value="ECO:0007669"/>
    <property type="project" value="InterPro"/>
</dbReference>
<dbReference type="GO" id="GO:0003861">
    <property type="term" value="F:3-isopropylmalate dehydratase activity"/>
    <property type="evidence" value="ECO:0007669"/>
    <property type="project" value="UniProtKB-UniRule"/>
</dbReference>
<dbReference type="GO" id="GO:0009098">
    <property type="term" value="P:L-leucine biosynthetic process"/>
    <property type="evidence" value="ECO:0007669"/>
    <property type="project" value="UniProtKB-UniRule"/>
</dbReference>
<dbReference type="CDD" id="cd01577">
    <property type="entry name" value="IPMI_Swivel"/>
    <property type="match status" value="1"/>
</dbReference>
<dbReference type="FunFam" id="3.20.19.10:FF:000003">
    <property type="entry name" value="3-isopropylmalate dehydratase small subunit"/>
    <property type="match status" value="1"/>
</dbReference>
<dbReference type="Gene3D" id="3.20.19.10">
    <property type="entry name" value="Aconitase, domain 4"/>
    <property type="match status" value="1"/>
</dbReference>
<dbReference type="HAMAP" id="MF_01031">
    <property type="entry name" value="LeuD_type1"/>
    <property type="match status" value="1"/>
</dbReference>
<dbReference type="InterPro" id="IPR004431">
    <property type="entry name" value="3-IsopropMal_deHydase_ssu"/>
</dbReference>
<dbReference type="InterPro" id="IPR015928">
    <property type="entry name" value="Aconitase/3IPM_dehydase_swvl"/>
</dbReference>
<dbReference type="InterPro" id="IPR000573">
    <property type="entry name" value="AconitaseA/IPMdHydase_ssu_swvl"/>
</dbReference>
<dbReference type="InterPro" id="IPR033940">
    <property type="entry name" value="IPMI_Swivel"/>
</dbReference>
<dbReference type="InterPro" id="IPR050075">
    <property type="entry name" value="LeuD"/>
</dbReference>
<dbReference type="NCBIfam" id="TIGR00171">
    <property type="entry name" value="leuD"/>
    <property type="match status" value="1"/>
</dbReference>
<dbReference type="NCBIfam" id="NF002458">
    <property type="entry name" value="PRK01641.1"/>
    <property type="match status" value="1"/>
</dbReference>
<dbReference type="PANTHER" id="PTHR43345:SF5">
    <property type="entry name" value="3-ISOPROPYLMALATE DEHYDRATASE SMALL SUBUNIT"/>
    <property type="match status" value="1"/>
</dbReference>
<dbReference type="PANTHER" id="PTHR43345">
    <property type="entry name" value="3-ISOPROPYLMALATE DEHYDRATASE SMALL SUBUNIT 2-RELATED-RELATED"/>
    <property type="match status" value="1"/>
</dbReference>
<dbReference type="Pfam" id="PF00694">
    <property type="entry name" value="Aconitase_C"/>
    <property type="match status" value="1"/>
</dbReference>
<dbReference type="SUPFAM" id="SSF52016">
    <property type="entry name" value="LeuD/IlvD-like"/>
    <property type="match status" value="1"/>
</dbReference>
<proteinExistence type="inferred from homology"/>
<sequence>MKPFTQHTGLVCPLDRVNVDTDQIIPKQFLKSIKRTGFGPNLFDEWRYLDAGQPGQDNSKRPINSDFVLNFPRYRGASVLLARDNFGCGSSREHAAWALDEYGFRTVIAPSFADIFFNNSFKNGLLPLVLNKVEVDALFAQCQVTEGYTLTVDLAAQQVITQDGTTYAFQIDTFRKHCLLNGLDDIGLTLQHAEAIRVFEAAHRIRQPWLFAPLH</sequence>
<gene>
    <name evidence="1" type="primary">leuD</name>
    <name type="ordered locus">XF_2374</name>
</gene>
<accession>Q9PAX1</accession>
<name>LEUD_XYLFA</name>
<feature type="chain" id="PRO_0000141915" description="3-isopropylmalate dehydratase small subunit">
    <location>
        <begin position="1"/>
        <end position="215"/>
    </location>
</feature>
<reference key="1">
    <citation type="journal article" date="2000" name="Nature">
        <title>The genome sequence of the plant pathogen Xylella fastidiosa.</title>
        <authorList>
            <person name="Simpson A.J.G."/>
            <person name="Reinach F.C."/>
            <person name="Arruda P."/>
            <person name="Abreu F.A."/>
            <person name="Acencio M."/>
            <person name="Alvarenga R."/>
            <person name="Alves L.M.C."/>
            <person name="Araya J.E."/>
            <person name="Baia G.S."/>
            <person name="Baptista C.S."/>
            <person name="Barros M.H."/>
            <person name="Bonaccorsi E.D."/>
            <person name="Bordin S."/>
            <person name="Bove J.M."/>
            <person name="Briones M.R.S."/>
            <person name="Bueno M.R.P."/>
            <person name="Camargo A.A."/>
            <person name="Camargo L.E.A."/>
            <person name="Carraro D.M."/>
            <person name="Carrer H."/>
            <person name="Colauto N.B."/>
            <person name="Colombo C."/>
            <person name="Costa F.F."/>
            <person name="Costa M.C.R."/>
            <person name="Costa-Neto C.M."/>
            <person name="Coutinho L.L."/>
            <person name="Cristofani M."/>
            <person name="Dias-Neto E."/>
            <person name="Docena C."/>
            <person name="El-Dorry H."/>
            <person name="Facincani A.P."/>
            <person name="Ferreira A.J.S."/>
            <person name="Ferreira V.C.A."/>
            <person name="Ferro J.A."/>
            <person name="Fraga J.S."/>
            <person name="Franca S.C."/>
            <person name="Franco M.C."/>
            <person name="Frohme M."/>
            <person name="Furlan L.R."/>
            <person name="Garnier M."/>
            <person name="Goldman G.H."/>
            <person name="Goldman M.H.S."/>
            <person name="Gomes S.L."/>
            <person name="Gruber A."/>
            <person name="Ho P.L."/>
            <person name="Hoheisel J.D."/>
            <person name="Junqueira M.L."/>
            <person name="Kemper E.L."/>
            <person name="Kitajima J.P."/>
            <person name="Krieger J.E."/>
            <person name="Kuramae E.E."/>
            <person name="Laigret F."/>
            <person name="Lambais M.R."/>
            <person name="Leite L.C.C."/>
            <person name="Lemos E.G.M."/>
            <person name="Lemos M.V.F."/>
            <person name="Lopes S.A."/>
            <person name="Lopes C.R."/>
            <person name="Machado J.A."/>
            <person name="Machado M.A."/>
            <person name="Madeira A.M.B.N."/>
            <person name="Madeira H.M.F."/>
            <person name="Marino C.L."/>
            <person name="Marques M.V."/>
            <person name="Martins E.A.L."/>
            <person name="Martins E.M.F."/>
            <person name="Matsukuma A.Y."/>
            <person name="Menck C.F.M."/>
            <person name="Miracca E.C."/>
            <person name="Miyaki C.Y."/>
            <person name="Monteiro-Vitorello C.B."/>
            <person name="Moon D.H."/>
            <person name="Nagai M.A."/>
            <person name="Nascimento A.L.T.O."/>
            <person name="Netto L.E.S."/>
            <person name="Nhani A. Jr."/>
            <person name="Nobrega F.G."/>
            <person name="Nunes L.R."/>
            <person name="Oliveira M.A."/>
            <person name="de Oliveira M.C."/>
            <person name="de Oliveira R.C."/>
            <person name="Palmieri D.A."/>
            <person name="Paris A."/>
            <person name="Peixoto B.R."/>
            <person name="Pereira G.A.G."/>
            <person name="Pereira H.A. Jr."/>
            <person name="Pesquero J.B."/>
            <person name="Quaggio R.B."/>
            <person name="Roberto P.G."/>
            <person name="Rodrigues V."/>
            <person name="de Rosa A.J.M."/>
            <person name="de Rosa V.E. Jr."/>
            <person name="de Sa R.G."/>
            <person name="Santelli R.V."/>
            <person name="Sawasaki H.E."/>
            <person name="da Silva A.C.R."/>
            <person name="da Silva A.M."/>
            <person name="da Silva F.R."/>
            <person name="Silva W.A. Jr."/>
            <person name="da Silveira J.F."/>
            <person name="Silvestri M.L.Z."/>
            <person name="Siqueira W.J."/>
            <person name="de Souza A.A."/>
            <person name="de Souza A.P."/>
            <person name="Terenzi M.F."/>
            <person name="Truffi D."/>
            <person name="Tsai S.M."/>
            <person name="Tsuhako M.H."/>
            <person name="Vallada H."/>
            <person name="Van Sluys M.A."/>
            <person name="Verjovski-Almeida S."/>
            <person name="Vettore A.L."/>
            <person name="Zago M.A."/>
            <person name="Zatz M."/>
            <person name="Meidanis J."/>
            <person name="Setubal J.C."/>
        </authorList>
    </citation>
    <scope>NUCLEOTIDE SEQUENCE [LARGE SCALE GENOMIC DNA]</scope>
    <source>
        <strain>9a5c</strain>
    </source>
</reference>
<comment type="function">
    <text evidence="1">Catalyzes the isomerization between 2-isopropylmalate and 3-isopropylmalate, via the formation of 2-isopropylmaleate.</text>
</comment>
<comment type="catalytic activity">
    <reaction evidence="1">
        <text>(2R,3S)-3-isopropylmalate = (2S)-2-isopropylmalate</text>
        <dbReference type="Rhea" id="RHEA:32287"/>
        <dbReference type="ChEBI" id="CHEBI:1178"/>
        <dbReference type="ChEBI" id="CHEBI:35121"/>
        <dbReference type="EC" id="4.2.1.33"/>
    </reaction>
</comment>
<comment type="pathway">
    <text evidence="1">Amino-acid biosynthesis; L-leucine biosynthesis; L-leucine from 3-methyl-2-oxobutanoate: step 2/4.</text>
</comment>
<comment type="subunit">
    <text evidence="1">Heterodimer of LeuC and LeuD.</text>
</comment>
<comment type="similarity">
    <text evidence="1">Belongs to the LeuD family. LeuD type 1 subfamily.</text>
</comment>
<evidence type="ECO:0000255" key="1">
    <source>
        <dbReference type="HAMAP-Rule" id="MF_01031"/>
    </source>
</evidence>